<protein>
    <recommendedName>
        <fullName evidence="1">Sugar fermentation stimulation protein homolog</fullName>
    </recommendedName>
</protein>
<reference key="1">
    <citation type="journal article" date="2006" name="Science">
        <title>Genomic islands and the ecology and evolution of Prochlorococcus.</title>
        <authorList>
            <person name="Coleman M.L."/>
            <person name="Sullivan M.B."/>
            <person name="Martiny A.C."/>
            <person name="Steglich C."/>
            <person name="Barry K."/>
            <person name="Delong E.F."/>
            <person name="Chisholm S.W."/>
        </authorList>
    </citation>
    <scope>NUCLEOTIDE SEQUENCE [LARGE SCALE GENOMIC DNA]</scope>
    <source>
        <strain>MIT 9312</strain>
    </source>
</reference>
<comment type="similarity">
    <text evidence="1">Belongs to the SfsA family.</text>
</comment>
<organism>
    <name type="scientific">Prochlorococcus marinus (strain MIT 9312)</name>
    <dbReference type="NCBI Taxonomy" id="74546"/>
    <lineage>
        <taxon>Bacteria</taxon>
        <taxon>Bacillati</taxon>
        <taxon>Cyanobacteriota</taxon>
        <taxon>Cyanophyceae</taxon>
        <taxon>Synechococcales</taxon>
        <taxon>Prochlorococcaceae</taxon>
        <taxon>Prochlorococcus</taxon>
    </lineage>
</organism>
<feature type="chain" id="PRO_1000008004" description="Sugar fermentation stimulation protein homolog">
    <location>
        <begin position="1"/>
        <end position="246"/>
    </location>
</feature>
<dbReference type="EMBL" id="CP000111">
    <property type="protein sequence ID" value="ABB49325.1"/>
    <property type="molecule type" value="Genomic_DNA"/>
</dbReference>
<dbReference type="RefSeq" id="WP_011375827.1">
    <property type="nucleotide sequence ID" value="NC_007577.1"/>
</dbReference>
<dbReference type="SMR" id="Q31CS0"/>
<dbReference type="STRING" id="74546.PMT9312_0264"/>
<dbReference type="KEGG" id="pmi:PMT9312_0264"/>
<dbReference type="eggNOG" id="COG1489">
    <property type="taxonomic scope" value="Bacteria"/>
</dbReference>
<dbReference type="HOGENOM" id="CLU_052299_2_0_3"/>
<dbReference type="OrthoDB" id="9802365at2"/>
<dbReference type="Proteomes" id="UP000002715">
    <property type="component" value="Chromosome"/>
</dbReference>
<dbReference type="GO" id="GO:0003677">
    <property type="term" value="F:DNA binding"/>
    <property type="evidence" value="ECO:0007669"/>
    <property type="project" value="InterPro"/>
</dbReference>
<dbReference type="CDD" id="cd22359">
    <property type="entry name" value="SfsA-like_bacterial"/>
    <property type="match status" value="1"/>
</dbReference>
<dbReference type="Gene3D" id="2.40.50.580">
    <property type="match status" value="1"/>
</dbReference>
<dbReference type="Gene3D" id="3.40.1350.60">
    <property type="match status" value="1"/>
</dbReference>
<dbReference type="HAMAP" id="MF_00095">
    <property type="entry name" value="SfsA"/>
    <property type="match status" value="1"/>
</dbReference>
<dbReference type="InterPro" id="IPR005224">
    <property type="entry name" value="SfsA"/>
</dbReference>
<dbReference type="InterPro" id="IPR040452">
    <property type="entry name" value="SfsA_C"/>
</dbReference>
<dbReference type="InterPro" id="IPR041465">
    <property type="entry name" value="SfsA_N"/>
</dbReference>
<dbReference type="NCBIfam" id="TIGR00230">
    <property type="entry name" value="sfsA"/>
    <property type="match status" value="1"/>
</dbReference>
<dbReference type="PANTHER" id="PTHR30545">
    <property type="entry name" value="SUGAR FERMENTATION STIMULATION PROTEIN A"/>
    <property type="match status" value="1"/>
</dbReference>
<dbReference type="PANTHER" id="PTHR30545:SF2">
    <property type="entry name" value="SUGAR FERMENTATION STIMULATION PROTEIN A"/>
    <property type="match status" value="1"/>
</dbReference>
<dbReference type="Pfam" id="PF03749">
    <property type="entry name" value="SfsA"/>
    <property type="match status" value="1"/>
</dbReference>
<dbReference type="Pfam" id="PF17746">
    <property type="entry name" value="SfsA_N"/>
    <property type="match status" value="1"/>
</dbReference>
<sequence>MNDRIIEFDPLIEGVLINRYKRFLADIELETGEVVTAHCANTGPMKGLLTEGAKVRMSVSPSPKRKLPFTWEQICVLDAKNEEVWVGINTLFANKLIKKVIEKNLLNEIIGEIETIKAEVPYGKDKKSRIDFFLTPKSSNPDKRNIYIEVKNTTWMKGNVALFPDTVTKRGQKHLIELKELIPASKSILILCITRKDACFFSPGDDADPLYGNLFRESFSAGMIPIPCSFEFHKDHITWNGIKPLK</sequence>
<proteinExistence type="inferred from homology"/>
<evidence type="ECO:0000255" key="1">
    <source>
        <dbReference type="HAMAP-Rule" id="MF_00095"/>
    </source>
</evidence>
<name>SFSA_PROM9</name>
<gene>
    <name evidence="1" type="primary">sfsA</name>
    <name type="ordered locus">PMT9312_0264</name>
</gene>
<accession>Q31CS0</accession>